<gene>
    <name evidence="1" type="primary">deoA</name>
    <name type="ordered locus">AHA_3689</name>
</gene>
<reference key="1">
    <citation type="journal article" date="2006" name="J. Bacteriol.">
        <title>Genome sequence of Aeromonas hydrophila ATCC 7966T: jack of all trades.</title>
        <authorList>
            <person name="Seshadri R."/>
            <person name="Joseph S.W."/>
            <person name="Chopra A.K."/>
            <person name="Sha J."/>
            <person name="Shaw J."/>
            <person name="Graf J."/>
            <person name="Haft D.H."/>
            <person name="Wu M."/>
            <person name="Ren Q."/>
            <person name="Rosovitz M.J."/>
            <person name="Madupu R."/>
            <person name="Tallon L."/>
            <person name="Kim M."/>
            <person name="Jin S."/>
            <person name="Vuong H."/>
            <person name="Stine O.C."/>
            <person name="Ali A."/>
            <person name="Horneman A.J."/>
            <person name="Heidelberg J.F."/>
        </authorList>
    </citation>
    <scope>NUCLEOTIDE SEQUENCE [LARGE SCALE GENOMIC DNA]</scope>
    <source>
        <strain>ATCC 7966 / DSM 30187 / BCRC 13018 / CCUG 14551 / JCM 1027 / KCTC 2358 / NCIMB 9240 / NCTC 8049</strain>
    </source>
</reference>
<sequence length="443" mass="46850">MFLPQEIIRKKRNGEALSTQEIQFFVQGITNNTIGEGQIAALAMAVYFKDMTMDERVALTCAMRDSGMVLTWDHLNLGGPIVDKHSTGGVGDVVSLMLGPMVAACGGFVPMISGRGLGHTGGTLDKLDAIPGYQTSVDNDRFLKVVKEAGVAIIGQTGDLAPADKRIYAVRDITATVESIAMITGSILSKKLASGLEALVMDVKVGSGAFMPTFEASEELAKSIVAVANGAGCRTSALLTDMNQVLASSAGNAVEVREAVRYLTGEYRNPRIHAVTMALCAEMLISAGLASDDGEARRKLQAVLDNGKAAEIFGRMVTGLGGPSDFMERYDHHLPKAAIVRPVYAANSGFVTAMDTRELGLAVVAMGGGRRAAGDKLDYAVGLTDFIRLGQSVEADKPLALIHAQTEEQFAQAASMVQAAVKIGDTRPEALPEVYRRIGLADL</sequence>
<comment type="function">
    <text evidence="1">The enzymes which catalyze the reversible phosphorolysis of pyrimidine nucleosides are involved in the degradation of these compounds and in their utilization as carbon and energy sources, or in the rescue of pyrimidine bases for nucleotide synthesis.</text>
</comment>
<comment type="catalytic activity">
    <reaction evidence="1">
        <text>thymidine + phosphate = 2-deoxy-alpha-D-ribose 1-phosphate + thymine</text>
        <dbReference type="Rhea" id="RHEA:16037"/>
        <dbReference type="ChEBI" id="CHEBI:17748"/>
        <dbReference type="ChEBI" id="CHEBI:17821"/>
        <dbReference type="ChEBI" id="CHEBI:43474"/>
        <dbReference type="ChEBI" id="CHEBI:57259"/>
        <dbReference type="EC" id="2.4.2.4"/>
    </reaction>
</comment>
<comment type="pathway">
    <text evidence="1">Pyrimidine metabolism; dTMP biosynthesis via salvage pathway; dTMP from thymine: step 1/2.</text>
</comment>
<comment type="subunit">
    <text evidence="1">Homodimer.</text>
</comment>
<comment type="similarity">
    <text evidence="1">Belongs to the thymidine/pyrimidine-nucleoside phosphorylase family.</text>
</comment>
<evidence type="ECO:0000255" key="1">
    <source>
        <dbReference type="HAMAP-Rule" id="MF_01628"/>
    </source>
</evidence>
<protein>
    <recommendedName>
        <fullName evidence="1">Thymidine phosphorylase</fullName>
        <ecNumber evidence="1">2.4.2.4</ecNumber>
    </recommendedName>
    <alternativeName>
        <fullName evidence="1">TdRPase</fullName>
    </alternativeName>
</protein>
<feature type="chain" id="PRO_1000069654" description="Thymidine phosphorylase">
    <location>
        <begin position="1"/>
        <end position="443"/>
    </location>
</feature>
<dbReference type="EC" id="2.4.2.4" evidence="1"/>
<dbReference type="EMBL" id="CP000462">
    <property type="protein sequence ID" value="ABK36357.1"/>
    <property type="molecule type" value="Genomic_DNA"/>
</dbReference>
<dbReference type="RefSeq" id="WP_011707412.1">
    <property type="nucleotide sequence ID" value="NC_008570.1"/>
</dbReference>
<dbReference type="RefSeq" id="YP_858144.1">
    <property type="nucleotide sequence ID" value="NC_008570.1"/>
</dbReference>
<dbReference type="SMR" id="A0KPE3"/>
<dbReference type="STRING" id="380703.AHA_3689"/>
<dbReference type="EnsemblBacteria" id="ABK36357">
    <property type="protein sequence ID" value="ABK36357"/>
    <property type="gene ID" value="AHA_3689"/>
</dbReference>
<dbReference type="GeneID" id="4488015"/>
<dbReference type="KEGG" id="aha:AHA_3689"/>
<dbReference type="PATRIC" id="fig|380703.7.peg.3667"/>
<dbReference type="eggNOG" id="COG0213">
    <property type="taxonomic scope" value="Bacteria"/>
</dbReference>
<dbReference type="HOGENOM" id="CLU_025040_0_1_6"/>
<dbReference type="OrthoDB" id="9763887at2"/>
<dbReference type="UniPathway" id="UPA00578">
    <property type="reaction ID" value="UER00638"/>
</dbReference>
<dbReference type="Proteomes" id="UP000000756">
    <property type="component" value="Chromosome"/>
</dbReference>
<dbReference type="GO" id="GO:0005829">
    <property type="term" value="C:cytosol"/>
    <property type="evidence" value="ECO:0007669"/>
    <property type="project" value="TreeGrafter"/>
</dbReference>
<dbReference type="GO" id="GO:0004645">
    <property type="term" value="F:1,4-alpha-oligoglucan phosphorylase activity"/>
    <property type="evidence" value="ECO:0007669"/>
    <property type="project" value="InterPro"/>
</dbReference>
<dbReference type="GO" id="GO:0009032">
    <property type="term" value="F:thymidine phosphorylase activity"/>
    <property type="evidence" value="ECO:0007669"/>
    <property type="project" value="UniProtKB-UniRule"/>
</dbReference>
<dbReference type="GO" id="GO:0006206">
    <property type="term" value="P:pyrimidine nucleobase metabolic process"/>
    <property type="evidence" value="ECO:0007669"/>
    <property type="project" value="InterPro"/>
</dbReference>
<dbReference type="GO" id="GO:0046104">
    <property type="term" value="P:thymidine metabolic process"/>
    <property type="evidence" value="ECO:0007669"/>
    <property type="project" value="UniProtKB-UniRule"/>
</dbReference>
<dbReference type="FunFam" id="3.40.1030.10:FF:000001">
    <property type="entry name" value="Thymidine phosphorylase"/>
    <property type="match status" value="1"/>
</dbReference>
<dbReference type="FunFam" id="3.90.1170.30:FF:000001">
    <property type="entry name" value="Thymidine phosphorylase"/>
    <property type="match status" value="1"/>
</dbReference>
<dbReference type="Gene3D" id="3.40.1030.10">
    <property type="entry name" value="Nucleoside phosphorylase/phosphoribosyltransferase catalytic domain"/>
    <property type="match status" value="1"/>
</dbReference>
<dbReference type="Gene3D" id="3.90.1170.30">
    <property type="entry name" value="Pyrimidine nucleoside phosphorylase-like, C-terminal domain"/>
    <property type="match status" value="1"/>
</dbReference>
<dbReference type="Gene3D" id="1.20.970.10">
    <property type="entry name" value="Transferase, Pyrimidine Nucleoside Phosphorylase, Chain C"/>
    <property type="match status" value="1"/>
</dbReference>
<dbReference type="HAMAP" id="MF_01628">
    <property type="entry name" value="Thymid_phosp"/>
    <property type="match status" value="1"/>
</dbReference>
<dbReference type="InterPro" id="IPR000312">
    <property type="entry name" value="Glycosyl_Trfase_fam3"/>
</dbReference>
<dbReference type="InterPro" id="IPR017459">
    <property type="entry name" value="Glycosyl_Trfase_fam3_N_dom"/>
</dbReference>
<dbReference type="InterPro" id="IPR036320">
    <property type="entry name" value="Glycosyl_Trfase_fam3_N_dom_sf"/>
</dbReference>
<dbReference type="InterPro" id="IPR035902">
    <property type="entry name" value="Nuc_phospho_transferase"/>
</dbReference>
<dbReference type="InterPro" id="IPR036566">
    <property type="entry name" value="PYNP-like_C_sf"/>
</dbReference>
<dbReference type="InterPro" id="IPR013102">
    <property type="entry name" value="PYNP_C"/>
</dbReference>
<dbReference type="InterPro" id="IPR018090">
    <property type="entry name" value="Pyrmidine_PPas_bac/euk"/>
</dbReference>
<dbReference type="InterPro" id="IPR017872">
    <property type="entry name" value="Pyrmidine_PPase_CS"/>
</dbReference>
<dbReference type="InterPro" id="IPR000053">
    <property type="entry name" value="Thymidine/pyrmidine_PPase"/>
</dbReference>
<dbReference type="InterPro" id="IPR013465">
    <property type="entry name" value="Thymidine_Pase"/>
</dbReference>
<dbReference type="NCBIfam" id="NF004490">
    <property type="entry name" value="PRK05820.1"/>
    <property type="match status" value="1"/>
</dbReference>
<dbReference type="NCBIfam" id="TIGR02643">
    <property type="entry name" value="T_phosphoryl"/>
    <property type="match status" value="1"/>
</dbReference>
<dbReference type="NCBIfam" id="TIGR02644">
    <property type="entry name" value="Y_phosphoryl"/>
    <property type="match status" value="1"/>
</dbReference>
<dbReference type="PANTHER" id="PTHR10515">
    <property type="entry name" value="THYMIDINE PHOSPHORYLASE"/>
    <property type="match status" value="1"/>
</dbReference>
<dbReference type="PANTHER" id="PTHR10515:SF0">
    <property type="entry name" value="THYMIDINE PHOSPHORYLASE"/>
    <property type="match status" value="1"/>
</dbReference>
<dbReference type="Pfam" id="PF02885">
    <property type="entry name" value="Glycos_trans_3N"/>
    <property type="match status" value="1"/>
</dbReference>
<dbReference type="Pfam" id="PF00591">
    <property type="entry name" value="Glycos_transf_3"/>
    <property type="match status" value="1"/>
</dbReference>
<dbReference type="Pfam" id="PF07831">
    <property type="entry name" value="PYNP_C"/>
    <property type="match status" value="1"/>
</dbReference>
<dbReference type="PIRSF" id="PIRSF000478">
    <property type="entry name" value="TP_PyNP"/>
    <property type="match status" value="1"/>
</dbReference>
<dbReference type="SMART" id="SM00941">
    <property type="entry name" value="PYNP_C"/>
    <property type="match status" value="1"/>
</dbReference>
<dbReference type="SUPFAM" id="SSF52418">
    <property type="entry name" value="Nucleoside phosphorylase/phosphoribosyltransferase catalytic domain"/>
    <property type="match status" value="1"/>
</dbReference>
<dbReference type="SUPFAM" id="SSF47648">
    <property type="entry name" value="Nucleoside phosphorylase/phosphoribosyltransferase N-terminal domain"/>
    <property type="match status" value="1"/>
</dbReference>
<dbReference type="SUPFAM" id="SSF54680">
    <property type="entry name" value="Pyrimidine nucleoside phosphorylase C-terminal domain"/>
    <property type="match status" value="1"/>
</dbReference>
<dbReference type="PROSITE" id="PS00647">
    <property type="entry name" value="THYMID_PHOSPHORYLASE"/>
    <property type="match status" value="1"/>
</dbReference>
<keyword id="KW-0328">Glycosyltransferase</keyword>
<keyword id="KW-1185">Reference proteome</keyword>
<keyword id="KW-0808">Transferase</keyword>
<accession>A0KPE3</accession>
<name>TYPH_AERHH</name>
<organism>
    <name type="scientific">Aeromonas hydrophila subsp. hydrophila (strain ATCC 7966 / DSM 30187 / BCRC 13018 / CCUG 14551 / JCM 1027 / KCTC 2358 / NCIMB 9240 / NCTC 8049)</name>
    <dbReference type="NCBI Taxonomy" id="380703"/>
    <lineage>
        <taxon>Bacteria</taxon>
        <taxon>Pseudomonadati</taxon>
        <taxon>Pseudomonadota</taxon>
        <taxon>Gammaproteobacteria</taxon>
        <taxon>Aeromonadales</taxon>
        <taxon>Aeromonadaceae</taxon>
        <taxon>Aeromonas</taxon>
    </lineage>
</organism>
<proteinExistence type="inferred from homology"/>